<comment type="function">
    <text evidence="1">Interacts with CbpA and inhibits both the DnaJ-like co-chaperone activity and the DNA binding activity of CbpA. Together with CbpA, modulates the activity of the DnaK chaperone system. Does not inhibit the co-chaperone activity of DnaJ.</text>
</comment>
<comment type="similarity">
    <text evidence="1">Belongs to the CbpM family.</text>
</comment>
<dbReference type="EMBL" id="CP000822">
    <property type="protein sequence ID" value="ABV13192.1"/>
    <property type="molecule type" value="Genomic_DNA"/>
</dbReference>
<dbReference type="RefSeq" id="WP_012132924.1">
    <property type="nucleotide sequence ID" value="NC_009792.1"/>
</dbReference>
<dbReference type="SMR" id="A8AI79"/>
<dbReference type="STRING" id="290338.CKO_02067"/>
<dbReference type="GeneID" id="45136024"/>
<dbReference type="KEGG" id="cko:CKO_02067"/>
<dbReference type="HOGENOM" id="CLU_144710_3_1_6"/>
<dbReference type="OrthoDB" id="5567704at2"/>
<dbReference type="Proteomes" id="UP000008148">
    <property type="component" value="Chromosome"/>
</dbReference>
<dbReference type="Gene3D" id="1.10.1660.10">
    <property type="match status" value="1"/>
</dbReference>
<dbReference type="HAMAP" id="MF_01155">
    <property type="entry name" value="CbpM"/>
    <property type="match status" value="1"/>
</dbReference>
<dbReference type="InterPro" id="IPR022835">
    <property type="entry name" value="CbpM"/>
</dbReference>
<dbReference type="NCBIfam" id="NF007617">
    <property type="entry name" value="PRK10265.1"/>
    <property type="match status" value="1"/>
</dbReference>
<dbReference type="Pfam" id="PF13591">
    <property type="entry name" value="MerR_2"/>
    <property type="match status" value="1"/>
</dbReference>
<keyword id="KW-1185">Reference proteome</keyword>
<name>CBPM_CITK8</name>
<gene>
    <name evidence="1" type="primary">cbpM</name>
    <name type="ordered locus">CKO_02067</name>
</gene>
<reference key="1">
    <citation type="submission" date="2007-08" db="EMBL/GenBank/DDBJ databases">
        <authorList>
            <consortium name="The Citrobacter koseri Genome Sequencing Project"/>
            <person name="McClelland M."/>
            <person name="Sanderson E.K."/>
            <person name="Porwollik S."/>
            <person name="Spieth J."/>
            <person name="Clifton W.S."/>
            <person name="Latreille P."/>
            <person name="Courtney L."/>
            <person name="Wang C."/>
            <person name="Pepin K."/>
            <person name="Bhonagiri V."/>
            <person name="Nash W."/>
            <person name="Johnson M."/>
            <person name="Thiruvilangam P."/>
            <person name="Wilson R."/>
        </authorList>
    </citation>
    <scope>NUCLEOTIDE SEQUENCE [LARGE SCALE GENOMIC DNA]</scope>
    <source>
        <strain>ATCC BAA-895 / CDC 4225-83 / SGSC4696</strain>
    </source>
</reference>
<protein>
    <recommendedName>
        <fullName evidence="1">Chaperone modulatory protein CbpM</fullName>
    </recommendedName>
</protein>
<organism>
    <name type="scientific">Citrobacter koseri (strain ATCC BAA-895 / CDC 4225-83 / SGSC4696)</name>
    <dbReference type="NCBI Taxonomy" id="290338"/>
    <lineage>
        <taxon>Bacteria</taxon>
        <taxon>Pseudomonadati</taxon>
        <taxon>Pseudomonadota</taxon>
        <taxon>Gammaproteobacteria</taxon>
        <taxon>Enterobacterales</taxon>
        <taxon>Enterobacteriaceae</taxon>
        <taxon>Citrobacter</taxon>
    </lineage>
</organism>
<proteinExistence type="inferred from homology"/>
<evidence type="ECO:0000255" key="1">
    <source>
        <dbReference type="HAMAP-Rule" id="MF_01155"/>
    </source>
</evidence>
<sequence>MVNVTVTFTITEFCLHTGVSEEELNEIVGLGVIEPCENETASWLFDDHAAIVVQRALRLRQELALDWPGIAMTLTLLEENDRLRQENRLLIQRLSRFIKHP</sequence>
<accession>A8AI79</accession>
<feature type="chain" id="PRO_1000065530" description="Chaperone modulatory protein CbpM">
    <location>
        <begin position="1"/>
        <end position="101"/>
    </location>
</feature>